<organism>
    <name type="scientific">Myxococcus xanthus (strain DK1622)</name>
    <dbReference type="NCBI Taxonomy" id="246197"/>
    <lineage>
        <taxon>Bacteria</taxon>
        <taxon>Pseudomonadati</taxon>
        <taxon>Myxococcota</taxon>
        <taxon>Myxococcia</taxon>
        <taxon>Myxococcales</taxon>
        <taxon>Cystobacterineae</taxon>
        <taxon>Myxococcaceae</taxon>
        <taxon>Myxococcus</taxon>
    </lineage>
</organism>
<proteinExistence type="inferred from homology"/>
<comment type="function">
    <text evidence="1">Cell wall formation. Catalyzes the transfer of a GlcNAc subunit on undecaprenyl-pyrophosphoryl-MurNAc-pentapeptide (lipid intermediate I) to form undecaprenyl-pyrophosphoryl-MurNAc-(pentapeptide)GlcNAc (lipid intermediate II).</text>
</comment>
<comment type="catalytic activity">
    <reaction evidence="1">
        <text>di-trans,octa-cis-undecaprenyl diphospho-N-acetyl-alpha-D-muramoyl-L-alanyl-D-glutamyl-meso-2,6-diaminopimeloyl-D-alanyl-D-alanine + UDP-N-acetyl-alpha-D-glucosamine = di-trans,octa-cis-undecaprenyl diphospho-[N-acetyl-alpha-D-glucosaminyl-(1-&gt;4)]-N-acetyl-alpha-D-muramoyl-L-alanyl-D-glutamyl-meso-2,6-diaminopimeloyl-D-alanyl-D-alanine + UDP + H(+)</text>
        <dbReference type="Rhea" id="RHEA:31227"/>
        <dbReference type="ChEBI" id="CHEBI:15378"/>
        <dbReference type="ChEBI" id="CHEBI:57705"/>
        <dbReference type="ChEBI" id="CHEBI:58223"/>
        <dbReference type="ChEBI" id="CHEBI:61387"/>
        <dbReference type="ChEBI" id="CHEBI:61388"/>
        <dbReference type="EC" id="2.4.1.227"/>
    </reaction>
</comment>
<comment type="pathway">
    <text evidence="1">Cell wall biogenesis; peptidoglycan biosynthesis.</text>
</comment>
<comment type="subcellular location">
    <subcellularLocation>
        <location evidence="1">Cell inner membrane</location>
        <topology evidence="1">Peripheral membrane protein</topology>
        <orientation evidence="1">Cytoplasmic side</orientation>
    </subcellularLocation>
</comment>
<comment type="similarity">
    <text evidence="1">Belongs to the glycosyltransferase 28 family. MurG subfamily.</text>
</comment>
<name>MURG_MYXXD</name>
<protein>
    <recommendedName>
        <fullName evidence="1">UDP-N-acetylglucosamine--N-acetylmuramyl-(pentapeptide) pyrophosphoryl-undecaprenol N-acetylglucosamine transferase</fullName>
        <ecNumber evidence="1">2.4.1.227</ecNumber>
    </recommendedName>
    <alternativeName>
        <fullName evidence="1">Undecaprenyl-PP-MurNAc-pentapeptide-UDPGlcNAc GlcNAc transferase</fullName>
    </alternativeName>
</protein>
<gene>
    <name evidence="1" type="primary">murG</name>
    <name type="ordered locus">MXAN_5604</name>
</gene>
<reference key="1">
    <citation type="journal article" date="2006" name="Proc. Natl. Acad. Sci. U.S.A.">
        <title>Evolution of sensory complexity recorded in a myxobacterial genome.</title>
        <authorList>
            <person name="Goldman B.S."/>
            <person name="Nierman W.C."/>
            <person name="Kaiser D."/>
            <person name="Slater S.C."/>
            <person name="Durkin A.S."/>
            <person name="Eisen J.A."/>
            <person name="Ronning C.M."/>
            <person name="Barbazuk W.B."/>
            <person name="Blanchard M."/>
            <person name="Field C."/>
            <person name="Halling C."/>
            <person name="Hinkle G."/>
            <person name="Iartchuk O."/>
            <person name="Kim H.S."/>
            <person name="Mackenzie C."/>
            <person name="Madupu R."/>
            <person name="Miller N."/>
            <person name="Shvartsbeyn A."/>
            <person name="Sullivan S.A."/>
            <person name="Vaudin M."/>
            <person name="Wiegand R."/>
            <person name="Kaplan H.B."/>
        </authorList>
    </citation>
    <scope>NUCLEOTIDE SEQUENCE [LARGE SCALE GENOMIC DNA]</scope>
    <source>
        <strain>DK1622</strain>
    </source>
</reference>
<evidence type="ECO:0000255" key="1">
    <source>
        <dbReference type="HAMAP-Rule" id="MF_00033"/>
    </source>
</evidence>
<evidence type="ECO:0000256" key="2">
    <source>
        <dbReference type="SAM" id="MobiDB-lite"/>
    </source>
</evidence>
<accession>Q1D0T0</accession>
<keyword id="KW-0131">Cell cycle</keyword>
<keyword id="KW-0132">Cell division</keyword>
<keyword id="KW-0997">Cell inner membrane</keyword>
<keyword id="KW-1003">Cell membrane</keyword>
<keyword id="KW-0133">Cell shape</keyword>
<keyword id="KW-0961">Cell wall biogenesis/degradation</keyword>
<keyword id="KW-0328">Glycosyltransferase</keyword>
<keyword id="KW-0472">Membrane</keyword>
<keyword id="KW-0573">Peptidoglycan synthesis</keyword>
<keyword id="KW-1185">Reference proteome</keyword>
<keyword id="KW-0808">Transferase</keyword>
<feature type="chain" id="PRO_0000315124" description="UDP-N-acetylglucosamine--N-acetylmuramyl-(pentapeptide) pyrophosphoryl-undecaprenol N-acetylglucosamine transferase">
    <location>
        <begin position="1"/>
        <end position="383"/>
    </location>
</feature>
<feature type="region of interest" description="Disordered" evidence="2">
    <location>
        <begin position="364"/>
        <end position="383"/>
    </location>
</feature>
<feature type="compositionally biased region" description="Basic and acidic residues" evidence="2">
    <location>
        <begin position="366"/>
        <end position="383"/>
    </location>
</feature>
<feature type="binding site" evidence="1">
    <location>
        <begin position="11"/>
        <end position="13"/>
    </location>
    <ligand>
        <name>UDP-N-acetyl-alpha-D-glucosamine</name>
        <dbReference type="ChEBI" id="CHEBI:57705"/>
    </ligand>
</feature>
<feature type="binding site" evidence="1">
    <location>
        <position position="125"/>
    </location>
    <ligand>
        <name>UDP-N-acetyl-alpha-D-glucosamine</name>
        <dbReference type="ChEBI" id="CHEBI:57705"/>
    </ligand>
</feature>
<feature type="binding site" evidence="1">
    <location>
        <position position="166"/>
    </location>
    <ligand>
        <name>UDP-N-acetyl-alpha-D-glucosamine</name>
        <dbReference type="ChEBI" id="CHEBI:57705"/>
    </ligand>
</feature>
<feature type="binding site" evidence="1">
    <location>
        <position position="191"/>
    </location>
    <ligand>
        <name>UDP-N-acetyl-alpha-D-glucosamine</name>
        <dbReference type="ChEBI" id="CHEBI:57705"/>
    </ligand>
</feature>
<feature type="binding site" evidence="1">
    <location>
        <position position="246"/>
    </location>
    <ligand>
        <name>UDP-N-acetyl-alpha-D-glucosamine</name>
        <dbReference type="ChEBI" id="CHEBI:57705"/>
    </ligand>
</feature>
<feature type="binding site" evidence="1">
    <location>
        <position position="291"/>
    </location>
    <ligand>
        <name>UDP-N-acetyl-alpha-D-glucosamine</name>
        <dbReference type="ChEBI" id="CHEBI:57705"/>
    </ligand>
</feature>
<dbReference type="EC" id="2.4.1.227" evidence="1"/>
<dbReference type="EMBL" id="CP000113">
    <property type="protein sequence ID" value="ABF90743.1"/>
    <property type="molecule type" value="Genomic_DNA"/>
</dbReference>
<dbReference type="RefSeq" id="WP_011555558.1">
    <property type="nucleotide sequence ID" value="NC_008095.1"/>
</dbReference>
<dbReference type="SMR" id="Q1D0T0"/>
<dbReference type="STRING" id="246197.MXAN_5604"/>
<dbReference type="CAZy" id="GT28">
    <property type="family name" value="Glycosyltransferase Family 28"/>
</dbReference>
<dbReference type="EnsemblBacteria" id="ABF90743">
    <property type="protein sequence ID" value="ABF90743"/>
    <property type="gene ID" value="MXAN_5604"/>
</dbReference>
<dbReference type="GeneID" id="41362850"/>
<dbReference type="KEGG" id="mxa:MXAN_5604"/>
<dbReference type="eggNOG" id="COG0707">
    <property type="taxonomic scope" value="Bacteria"/>
</dbReference>
<dbReference type="HOGENOM" id="CLU_037404_2_1_7"/>
<dbReference type="OrthoDB" id="9808936at2"/>
<dbReference type="UniPathway" id="UPA00219"/>
<dbReference type="Proteomes" id="UP000002402">
    <property type="component" value="Chromosome"/>
</dbReference>
<dbReference type="GO" id="GO:0005886">
    <property type="term" value="C:plasma membrane"/>
    <property type="evidence" value="ECO:0007669"/>
    <property type="project" value="UniProtKB-SubCell"/>
</dbReference>
<dbReference type="GO" id="GO:0051991">
    <property type="term" value="F:UDP-N-acetyl-D-glucosamine:N-acetylmuramoyl-L-alanyl-D-glutamyl-meso-2,6-diaminopimelyl-D-alanyl-D-alanine-diphosphoundecaprenol 4-beta-N-acetylglucosaminlytransferase activity"/>
    <property type="evidence" value="ECO:0007669"/>
    <property type="project" value="RHEA"/>
</dbReference>
<dbReference type="GO" id="GO:0050511">
    <property type="term" value="F:undecaprenyldiphospho-muramoylpentapeptide beta-N-acetylglucosaminyltransferase activity"/>
    <property type="evidence" value="ECO:0007669"/>
    <property type="project" value="UniProtKB-UniRule"/>
</dbReference>
<dbReference type="GO" id="GO:0005975">
    <property type="term" value="P:carbohydrate metabolic process"/>
    <property type="evidence" value="ECO:0007669"/>
    <property type="project" value="InterPro"/>
</dbReference>
<dbReference type="GO" id="GO:0051301">
    <property type="term" value="P:cell division"/>
    <property type="evidence" value="ECO:0007669"/>
    <property type="project" value="UniProtKB-KW"/>
</dbReference>
<dbReference type="GO" id="GO:0071555">
    <property type="term" value="P:cell wall organization"/>
    <property type="evidence" value="ECO:0007669"/>
    <property type="project" value="UniProtKB-KW"/>
</dbReference>
<dbReference type="GO" id="GO:0030259">
    <property type="term" value="P:lipid glycosylation"/>
    <property type="evidence" value="ECO:0007669"/>
    <property type="project" value="UniProtKB-UniRule"/>
</dbReference>
<dbReference type="GO" id="GO:0009252">
    <property type="term" value="P:peptidoglycan biosynthetic process"/>
    <property type="evidence" value="ECO:0007669"/>
    <property type="project" value="UniProtKB-UniRule"/>
</dbReference>
<dbReference type="GO" id="GO:0008360">
    <property type="term" value="P:regulation of cell shape"/>
    <property type="evidence" value="ECO:0007669"/>
    <property type="project" value="UniProtKB-KW"/>
</dbReference>
<dbReference type="CDD" id="cd03785">
    <property type="entry name" value="GT28_MurG"/>
    <property type="match status" value="1"/>
</dbReference>
<dbReference type="Gene3D" id="3.40.50.2000">
    <property type="entry name" value="Glycogen Phosphorylase B"/>
    <property type="match status" value="2"/>
</dbReference>
<dbReference type="HAMAP" id="MF_00033">
    <property type="entry name" value="MurG"/>
    <property type="match status" value="1"/>
</dbReference>
<dbReference type="InterPro" id="IPR006009">
    <property type="entry name" value="GlcNAc_MurG"/>
</dbReference>
<dbReference type="InterPro" id="IPR007235">
    <property type="entry name" value="Glyco_trans_28_C"/>
</dbReference>
<dbReference type="InterPro" id="IPR004276">
    <property type="entry name" value="GlycoTrans_28_N"/>
</dbReference>
<dbReference type="NCBIfam" id="TIGR01133">
    <property type="entry name" value="murG"/>
    <property type="match status" value="1"/>
</dbReference>
<dbReference type="PANTHER" id="PTHR21015:SF22">
    <property type="entry name" value="GLYCOSYLTRANSFERASE"/>
    <property type="match status" value="1"/>
</dbReference>
<dbReference type="PANTHER" id="PTHR21015">
    <property type="entry name" value="UDP-N-ACETYLGLUCOSAMINE--N-ACETYLMURAMYL-(PENTAPEPTIDE) PYROPHOSPHORYL-UNDECAPRENOL N-ACETYLGLUCOSAMINE TRANSFERASE 1"/>
    <property type="match status" value="1"/>
</dbReference>
<dbReference type="Pfam" id="PF04101">
    <property type="entry name" value="Glyco_tran_28_C"/>
    <property type="match status" value="1"/>
</dbReference>
<dbReference type="Pfam" id="PF03033">
    <property type="entry name" value="Glyco_transf_28"/>
    <property type="match status" value="1"/>
</dbReference>
<dbReference type="SUPFAM" id="SSF53756">
    <property type="entry name" value="UDP-Glycosyltransferase/glycogen phosphorylase"/>
    <property type="match status" value="1"/>
</dbReference>
<sequence length="383" mass="41785">MMKVLIAGGGTGGHLFPGIALAEEVVTRHHRNEVVFVGTERGIESRVVPKEGYPLELVKVQGLKGKGFLSLLKALFALPLAFIESFRILARQKPDVVVGVGGYASGPVVMAAWLMGIPTAIQEQNALPGFTNKVLGRIVRVVFIAFEEARAFFPEKKVQLIGNPIRRKLMDNYLRSHVAHERFSVLVFGGSLGARGINQRMTEALDSLGDLKDSLHFVHQTGKNDLESVRKGYADKGFQAEVVEFIDDMSSAYARADLVVCRAGATTLAELTVCKKASILIPFPHATDDHQAVNARALVDAGAALMFRESELTGEKLAQTVRELKSHPERLKSMEKKAGLLGRPEAAKELADVCVDLMVQTWGPNGRERTPIEAEKKAPRSNS</sequence>